<keyword id="KW-0202">Cytokine</keyword>
<keyword id="KW-1015">Disulfide bond</keyword>
<keyword id="KW-0325">Glycoprotein</keyword>
<keyword id="KW-0472">Membrane</keyword>
<keyword id="KW-1185">Reference proteome</keyword>
<keyword id="KW-0735">Signal-anchor</keyword>
<keyword id="KW-0812">Transmembrane</keyword>
<keyword id="KW-1133">Transmembrane helix</keyword>
<accession>Q9Z2P3</accession>
<protein>
    <recommendedName>
        <fullName>Tumor necrosis factor ligand superfamily member 4</fullName>
    </recommendedName>
    <alternativeName>
        <fullName>OX40 ligand</fullName>
        <shortName>OX40L</shortName>
    </alternativeName>
    <cdAntigenName>CD252</cdAntigenName>
</protein>
<feature type="chain" id="PRO_0000185496" description="Tumor necrosis factor ligand superfamily member 4">
    <location>
        <begin position="1"/>
        <end position="199"/>
    </location>
</feature>
<feature type="topological domain" description="Cytoplasmic" evidence="2">
    <location>
        <begin position="1"/>
        <end position="25"/>
    </location>
</feature>
<feature type="transmembrane region" description="Helical; Signal-anchor for type II membrane protein" evidence="2">
    <location>
        <begin position="26"/>
        <end position="48"/>
    </location>
</feature>
<feature type="topological domain" description="Extracellular" evidence="2">
    <location>
        <begin position="49"/>
        <end position="199"/>
    </location>
</feature>
<feature type="domain" description="THD" evidence="3">
    <location>
        <begin position="59"/>
        <end position="176"/>
    </location>
</feature>
<feature type="glycosylation site" description="N-linked (GlcNAc...) asparagine" evidence="2">
    <location>
        <position position="91"/>
    </location>
</feature>
<feature type="glycosylation site" description="N-linked (GlcNAc...) asparagine" evidence="2">
    <location>
        <position position="157"/>
    </location>
</feature>
<feature type="disulfide bond" evidence="3">
    <location>
        <begin position="70"/>
        <end position="163"/>
    </location>
</feature>
<feature type="disulfide bond" evidence="1">
    <location>
        <begin position="98"/>
        <end position="184"/>
    </location>
</feature>
<comment type="function">
    <text evidence="1">Cytokine that binds to TNFRSF4. Co-stimulates T-cell proliferation and cytokine production (By similarity).</text>
</comment>
<comment type="subunit">
    <text evidence="4">Homotrimer.</text>
</comment>
<comment type="subcellular location">
    <subcellularLocation>
        <location>Membrane</location>
        <topology>Single-pass type II membrane protein</topology>
    </subcellularLocation>
</comment>
<comment type="tissue specificity">
    <text>Detected in T-cell lines, but not in a macrophage cell line.</text>
</comment>
<comment type="similarity">
    <text evidence="4">Belongs to the tumor necrosis factor family.</text>
</comment>
<evidence type="ECO:0000250" key="1"/>
<evidence type="ECO:0000255" key="2"/>
<evidence type="ECO:0000255" key="3">
    <source>
        <dbReference type="PROSITE-ProRule" id="PRU01387"/>
    </source>
</evidence>
<evidence type="ECO:0000305" key="4"/>
<dbReference type="EMBL" id="AF037067">
    <property type="protein sequence ID" value="AAC67236.1"/>
    <property type="molecule type" value="mRNA"/>
</dbReference>
<dbReference type="PIR" id="JE0351">
    <property type="entry name" value="JE0351"/>
</dbReference>
<dbReference type="RefSeq" id="NP_446004.1">
    <property type="nucleotide sequence ID" value="NM_053552.2"/>
</dbReference>
<dbReference type="SMR" id="Q9Z2P3"/>
<dbReference type="FunCoup" id="Q9Z2P3">
    <property type="interactions" value="16"/>
</dbReference>
<dbReference type="STRING" id="10116.ENSRNOP00000003969"/>
<dbReference type="GlyCosmos" id="Q9Z2P3">
    <property type="glycosylation" value="2 sites, No reported glycans"/>
</dbReference>
<dbReference type="GlyGen" id="Q9Z2P3">
    <property type="glycosylation" value="2 sites"/>
</dbReference>
<dbReference type="PhosphoSitePlus" id="Q9Z2P3"/>
<dbReference type="PaxDb" id="10116-ENSRNOP00000003969"/>
<dbReference type="Ensembl" id="ENSRNOT00000003969.6">
    <property type="protein sequence ID" value="ENSRNOP00000003969.3"/>
    <property type="gene ID" value="ENSRNOG00000002968.6"/>
</dbReference>
<dbReference type="GeneID" id="89814"/>
<dbReference type="KEGG" id="rno:89814"/>
<dbReference type="UCSC" id="RGD:619816">
    <property type="organism name" value="rat"/>
</dbReference>
<dbReference type="AGR" id="RGD:619816"/>
<dbReference type="CTD" id="7292"/>
<dbReference type="RGD" id="619816">
    <property type="gene designation" value="Tnfsf4"/>
</dbReference>
<dbReference type="eggNOG" id="ENOG502ST4X">
    <property type="taxonomic scope" value="Eukaryota"/>
</dbReference>
<dbReference type="GeneTree" id="ENSGT00390000015127"/>
<dbReference type="HOGENOM" id="CLU_091735_0_0_1"/>
<dbReference type="InParanoid" id="Q9Z2P3"/>
<dbReference type="OMA" id="TTHNTSC"/>
<dbReference type="OrthoDB" id="9424588at2759"/>
<dbReference type="PhylomeDB" id="Q9Z2P3"/>
<dbReference type="TreeFam" id="TF336384"/>
<dbReference type="Reactome" id="R-RNO-5669034">
    <property type="pathway name" value="TNFs bind their physiological receptors"/>
</dbReference>
<dbReference type="PRO" id="PR:Q9Z2P3"/>
<dbReference type="Proteomes" id="UP000002494">
    <property type="component" value="Chromosome 13"/>
</dbReference>
<dbReference type="Bgee" id="ENSRNOG00000002968">
    <property type="expression patterns" value="Expressed in thymus"/>
</dbReference>
<dbReference type="ExpressionAtlas" id="Q9Z2P3">
    <property type="expression patterns" value="baseline and differential"/>
</dbReference>
<dbReference type="GO" id="GO:0009986">
    <property type="term" value="C:cell surface"/>
    <property type="evidence" value="ECO:0000314"/>
    <property type="project" value="RGD"/>
</dbReference>
<dbReference type="GO" id="GO:0005615">
    <property type="term" value="C:extracellular space"/>
    <property type="evidence" value="ECO:0000266"/>
    <property type="project" value="RGD"/>
</dbReference>
<dbReference type="GO" id="GO:0016020">
    <property type="term" value="C:membrane"/>
    <property type="evidence" value="ECO:0007669"/>
    <property type="project" value="UniProtKB-SubCell"/>
</dbReference>
<dbReference type="GO" id="GO:0005125">
    <property type="term" value="F:cytokine activity"/>
    <property type="evidence" value="ECO:0007669"/>
    <property type="project" value="UniProtKB-KW"/>
</dbReference>
<dbReference type="GO" id="GO:0005164">
    <property type="term" value="F:tumor necrosis factor receptor binding"/>
    <property type="evidence" value="ECO:0000266"/>
    <property type="project" value="RGD"/>
</dbReference>
<dbReference type="GO" id="GO:0032813">
    <property type="term" value="F:tumor necrosis factor receptor superfamily binding"/>
    <property type="evidence" value="ECO:0000315"/>
    <property type="project" value="RGD"/>
</dbReference>
<dbReference type="GO" id="GO:0002526">
    <property type="term" value="P:acute inflammatory response"/>
    <property type="evidence" value="ECO:0000266"/>
    <property type="project" value="RGD"/>
</dbReference>
<dbReference type="GO" id="GO:0035783">
    <property type="term" value="P:CD4-positive, alpha-beta T cell costimulation"/>
    <property type="evidence" value="ECO:0000266"/>
    <property type="project" value="RGD"/>
</dbReference>
<dbReference type="GO" id="GO:0071222">
    <property type="term" value="P:cellular response to lipopolysaccharide"/>
    <property type="evidence" value="ECO:0000266"/>
    <property type="project" value="RGD"/>
</dbReference>
<dbReference type="GO" id="GO:0035714">
    <property type="term" value="P:cellular response to nitrogen dioxide"/>
    <property type="evidence" value="ECO:0000266"/>
    <property type="project" value="RGD"/>
</dbReference>
<dbReference type="GO" id="GO:0071380">
    <property type="term" value="P:cellular response to prostaglandin E stimulus"/>
    <property type="evidence" value="ECO:0000266"/>
    <property type="project" value="RGD"/>
</dbReference>
<dbReference type="GO" id="GO:0008203">
    <property type="term" value="P:cholesterol metabolic process"/>
    <property type="evidence" value="ECO:0000266"/>
    <property type="project" value="RGD"/>
</dbReference>
<dbReference type="GO" id="GO:0002215">
    <property type="term" value="P:defense response to nematode"/>
    <property type="evidence" value="ECO:0000266"/>
    <property type="project" value="RGD"/>
</dbReference>
<dbReference type="GO" id="GO:0006955">
    <property type="term" value="P:immune response"/>
    <property type="evidence" value="ECO:0007669"/>
    <property type="project" value="InterPro"/>
</dbReference>
<dbReference type="GO" id="GO:0006954">
    <property type="term" value="P:inflammatory response"/>
    <property type="evidence" value="ECO:0000266"/>
    <property type="project" value="RGD"/>
</dbReference>
<dbReference type="GO" id="GO:0035709">
    <property type="term" value="P:memory T cell activation"/>
    <property type="evidence" value="ECO:0000266"/>
    <property type="project" value="RGD"/>
</dbReference>
<dbReference type="GO" id="GO:0001818">
    <property type="term" value="P:negative regulation of cytokine production"/>
    <property type="evidence" value="ECO:0000266"/>
    <property type="project" value="RGD"/>
</dbReference>
<dbReference type="GO" id="GO:0045892">
    <property type="term" value="P:negative regulation of DNA-templated transcription"/>
    <property type="evidence" value="ECO:0000266"/>
    <property type="project" value="RGD"/>
</dbReference>
<dbReference type="GO" id="GO:0032700">
    <property type="term" value="P:negative regulation of interleukin-17 production"/>
    <property type="evidence" value="ECO:0000266"/>
    <property type="project" value="RGD"/>
</dbReference>
<dbReference type="GO" id="GO:0045590">
    <property type="term" value="P:negative regulation of regulatory T cell differentiation"/>
    <property type="evidence" value="ECO:0000266"/>
    <property type="project" value="RGD"/>
</dbReference>
<dbReference type="GO" id="GO:0045626">
    <property type="term" value="P:negative regulation of T-helper 1 cell differentiation"/>
    <property type="evidence" value="ECO:0000266"/>
    <property type="project" value="RGD"/>
</dbReference>
<dbReference type="GO" id="GO:0032689">
    <property type="term" value="P:negative regulation of type II interferon production"/>
    <property type="evidence" value="ECO:0000266"/>
    <property type="project" value="RGD"/>
</dbReference>
<dbReference type="GO" id="GO:0042104">
    <property type="term" value="P:positive regulation of activated T cell proliferation"/>
    <property type="evidence" value="ECO:0000314"/>
    <property type="project" value="RGD"/>
</dbReference>
<dbReference type="GO" id="GO:0046641">
    <property type="term" value="P:positive regulation of alpha-beta T cell proliferation"/>
    <property type="evidence" value="ECO:0000266"/>
    <property type="project" value="RGD"/>
</dbReference>
<dbReference type="GO" id="GO:0050871">
    <property type="term" value="P:positive regulation of B cell activation"/>
    <property type="evidence" value="ECO:0000266"/>
    <property type="project" value="RGD"/>
</dbReference>
<dbReference type="GO" id="GO:1900281">
    <property type="term" value="P:positive regulation of CD4-positive, alpha-beta T cell costimulation"/>
    <property type="evidence" value="ECO:0000266"/>
    <property type="project" value="RGD"/>
</dbReference>
<dbReference type="GO" id="GO:0043372">
    <property type="term" value="P:positive regulation of CD4-positive, alpha-beta T cell differentiation"/>
    <property type="evidence" value="ECO:0000266"/>
    <property type="project" value="RGD"/>
</dbReference>
<dbReference type="GO" id="GO:0032722">
    <property type="term" value="P:positive regulation of chemokine production"/>
    <property type="evidence" value="ECO:0000266"/>
    <property type="project" value="RGD"/>
</dbReference>
<dbReference type="GO" id="GO:0001819">
    <property type="term" value="P:positive regulation of cytokine production"/>
    <property type="evidence" value="ECO:0000318"/>
    <property type="project" value="GO_Central"/>
</dbReference>
<dbReference type="GO" id="GO:0002891">
    <property type="term" value="P:positive regulation of immunoglobulin mediated immune response"/>
    <property type="evidence" value="ECO:0000266"/>
    <property type="project" value="RGD"/>
</dbReference>
<dbReference type="GO" id="GO:0002639">
    <property type="term" value="P:positive regulation of immunoglobulin production"/>
    <property type="evidence" value="ECO:0000266"/>
    <property type="project" value="RGD"/>
</dbReference>
<dbReference type="GO" id="GO:0050729">
    <property type="term" value="P:positive regulation of inflammatory response"/>
    <property type="evidence" value="ECO:0000266"/>
    <property type="project" value="RGD"/>
</dbReference>
<dbReference type="GO" id="GO:0032733">
    <property type="term" value="P:positive regulation of interleukin-10 production"/>
    <property type="evidence" value="ECO:0000266"/>
    <property type="project" value="RGD"/>
</dbReference>
<dbReference type="GO" id="GO:0032735">
    <property type="term" value="P:positive regulation of interleukin-12 production"/>
    <property type="evidence" value="ECO:0000266"/>
    <property type="project" value="RGD"/>
</dbReference>
<dbReference type="GO" id="GO:0032736">
    <property type="term" value="P:positive regulation of interleukin-13 production"/>
    <property type="evidence" value="ECO:0000266"/>
    <property type="project" value="RGD"/>
</dbReference>
<dbReference type="GO" id="GO:0032743">
    <property type="term" value="P:positive regulation of interleukin-2 production"/>
    <property type="evidence" value="ECO:0000314"/>
    <property type="project" value="RGD"/>
</dbReference>
<dbReference type="GO" id="GO:0032753">
    <property type="term" value="P:positive regulation of interleukin-4 production"/>
    <property type="evidence" value="ECO:0000266"/>
    <property type="project" value="RGD"/>
</dbReference>
<dbReference type="GO" id="GO:2000572">
    <property type="term" value="P:positive regulation of interleukin-4-dependent isotype switching to IgE isotypes"/>
    <property type="evidence" value="ECO:0000266"/>
    <property type="project" value="RGD"/>
</dbReference>
<dbReference type="GO" id="GO:0032755">
    <property type="term" value="P:positive regulation of interleukin-6 production"/>
    <property type="evidence" value="ECO:0000266"/>
    <property type="project" value="RGD"/>
</dbReference>
<dbReference type="GO" id="GO:2000568">
    <property type="term" value="P:positive regulation of memory T cell activation"/>
    <property type="evidence" value="ECO:0000266"/>
    <property type="project" value="RGD"/>
</dbReference>
<dbReference type="GO" id="GO:0043382">
    <property type="term" value="P:positive regulation of memory T cell differentiation"/>
    <property type="evidence" value="ECO:0000266"/>
    <property type="project" value="RGD"/>
</dbReference>
<dbReference type="GO" id="GO:2000525">
    <property type="term" value="P:positive regulation of T cell costimulation"/>
    <property type="evidence" value="ECO:0000266"/>
    <property type="project" value="RGD"/>
</dbReference>
<dbReference type="GO" id="GO:0002726">
    <property type="term" value="P:positive regulation of T cell cytokine production"/>
    <property type="evidence" value="ECO:0000266"/>
    <property type="project" value="RGD"/>
</dbReference>
<dbReference type="GO" id="GO:0042102">
    <property type="term" value="P:positive regulation of T cell proliferation"/>
    <property type="evidence" value="ECO:0000318"/>
    <property type="project" value="GO_Central"/>
</dbReference>
<dbReference type="GO" id="GO:2000570">
    <property type="term" value="P:positive regulation of T-helper 2 cell activation"/>
    <property type="evidence" value="ECO:0000266"/>
    <property type="project" value="RGD"/>
</dbReference>
<dbReference type="GO" id="GO:0045630">
    <property type="term" value="P:positive regulation of T-helper 2 cell differentiation"/>
    <property type="evidence" value="ECO:0000266"/>
    <property type="project" value="RGD"/>
</dbReference>
<dbReference type="GO" id="GO:0002830">
    <property type="term" value="P:positive regulation of type 2 immune response"/>
    <property type="evidence" value="ECO:0000266"/>
    <property type="project" value="RGD"/>
</dbReference>
<dbReference type="GO" id="GO:0032729">
    <property type="term" value="P:positive regulation of type II interferon production"/>
    <property type="evidence" value="ECO:0000266"/>
    <property type="project" value="RGD"/>
</dbReference>
<dbReference type="GO" id="GO:0002819">
    <property type="term" value="P:regulation of adaptive immune response"/>
    <property type="evidence" value="ECO:0000266"/>
    <property type="project" value="RGD"/>
</dbReference>
<dbReference type="GO" id="GO:0050727">
    <property type="term" value="P:regulation of inflammatory response"/>
    <property type="evidence" value="ECO:0000266"/>
    <property type="project" value="RGD"/>
</dbReference>
<dbReference type="GO" id="GO:0035713">
    <property type="term" value="P:response to nitrogen dioxide"/>
    <property type="evidence" value="ECO:0000266"/>
    <property type="project" value="RGD"/>
</dbReference>
<dbReference type="GO" id="GO:0009615">
    <property type="term" value="P:response to virus"/>
    <property type="evidence" value="ECO:0000266"/>
    <property type="project" value="RGD"/>
</dbReference>
<dbReference type="GO" id="GO:0042098">
    <property type="term" value="P:T cell proliferation"/>
    <property type="evidence" value="ECO:0000315"/>
    <property type="project" value="RGD"/>
</dbReference>
<dbReference type="GO" id="GO:0035712">
    <property type="term" value="P:T-helper 2 cell activation"/>
    <property type="evidence" value="ECO:0000266"/>
    <property type="project" value="RGD"/>
</dbReference>
<dbReference type="FunFam" id="2.60.120.40:FF:000039">
    <property type="entry name" value="Tumor necrosis factor (Ligand) superfamily member 4"/>
    <property type="match status" value="1"/>
</dbReference>
<dbReference type="Gene3D" id="2.60.120.40">
    <property type="match status" value="1"/>
</dbReference>
<dbReference type="InterPro" id="IPR021184">
    <property type="entry name" value="TNF_CS"/>
</dbReference>
<dbReference type="InterPro" id="IPR006052">
    <property type="entry name" value="TNF_dom"/>
</dbReference>
<dbReference type="InterPro" id="IPR042338">
    <property type="entry name" value="TNFSF4"/>
</dbReference>
<dbReference type="InterPro" id="IPR008983">
    <property type="entry name" value="Tumour_necrosis_fac-like_dom"/>
</dbReference>
<dbReference type="PANTHER" id="PTHR17534">
    <property type="entry name" value="OX40 LIGAND"/>
    <property type="match status" value="1"/>
</dbReference>
<dbReference type="PANTHER" id="PTHR17534:SF4">
    <property type="entry name" value="TUMOR NECROSIS FACTOR LIGAND SUPERFAMILY MEMBER 4"/>
    <property type="match status" value="1"/>
</dbReference>
<dbReference type="SMART" id="SM00207">
    <property type="entry name" value="TNF"/>
    <property type="match status" value="1"/>
</dbReference>
<dbReference type="SUPFAM" id="SSF49842">
    <property type="entry name" value="TNF-like"/>
    <property type="match status" value="1"/>
</dbReference>
<dbReference type="PROSITE" id="PS00251">
    <property type="entry name" value="THD_1"/>
    <property type="match status" value="1"/>
</dbReference>
<dbReference type="PROSITE" id="PS50049">
    <property type="entry name" value="THD_2"/>
    <property type="match status" value="1"/>
</dbReference>
<organism>
    <name type="scientific">Rattus norvegicus</name>
    <name type="common">Rat</name>
    <dbReference type="NCBI Taxonomy" id="10116"/>
    <lineage>
        <taxon>Eukaryota</taxon>
        <taxon>Metazoa</taxon>
        <taxon>Chordata</taxon>
        <taxon>Craniata</taxon>
        <taxon>Vertebrata</taxon>
        <taxon>Euteleostomi</taxon>
        <taxon>Mammalia</taxon>
        <taxon>Eutheria</taxon>
        <taxon>Euarchontoglires</taxon>
        <taxon>Glires</taxon>
        <taxon>Rodentia</taxon>
        <taxon>Myomorpha</taxon>
        <taxon>Muroidea</taxon>
        <taxon>Muridae</taxon>
        <taxon>Murinae</taxon>
        <taxon>Rattus</taxon>
    </lineage>
</organism>
<reference key="1">
    <citation type="journal article" date="1998" name="Biochem. Biophys. Res. Commun.">
        <title>Identification of rat OX40 ligand by molecular cloning.</title>
        <authorList>
            <person name="Akiba H."/>
            <person name="Atsuta M."/>
            <person name="Yagita H."/>
            <person name="Okumura K."/>
        </authorList>
    </citation>
    <scope>NUCLEOTIDE SEQUENCE [MRNA]</scope>
    <source>
        <strain>Sprague-Dawley</strain>
        <tissue>T-cell lymphoma</tissue>
    </source>
</reference>
<gene>
    <name type="primary">Tnfsf4</name>
    <name type="synonym">Ox40l</name>
    <name type="synonym">Txgp1</name>
</gene>
<name>TNFL4_RAT</name>
<sequence>MEGEGVQPPDENLENGSRPRFKWKKVLRLVVSGIKAAGLLLCVVYVCLQFSSSPAKDSPIQRLRAPVTGCEGGRLFIGTSKNEYETMEVQNNSVIINCDGLYLIHLKGSFFQEVKINLHFRKDRSPIFVPMLNNGQRVVFTVVTSLAFKDEVYLTVNASDTLCEHLQINDGELIIVQLTPNGYCAPERPYSSTVNQVPL</sequence>
<proteinExistence type="evidence at transcript level"/>